<feature type="chain" id="PRO_0000421103" description="6-phosphogluconate dehydrogenase, decarboxylating 1">
    <location>
        <begin position="1"/>
        <end position="483"/>
    </location>
</feature>
<feature type="active site" description="Proton acceptor" evidence="1">
    <location>
        <position position="186"/>
    </location>
</feature>
<feature type="active site" description="Proton donor" evidence="1">
    <location>
        <position position="193"/>
    </location>
</feature>
<feature type="binding site" evidence="1">
    <location>
        <begin position="11"/>
        <end position="16"/>
    </location>
    <ligand>
        <name>NADP(+)</name>
        <dbReference type="ChEBI" id="CHEBI:58349"/>
    </ligand>
</feature>
<feature type="binding site" evidence="1">
    <location>
        <begin position="34"/>
        <end position="36"/>
    </location>
    <ligand>
        <name>NADP(+)</name>
        <dbReference type="ChEBI" id="CHEBI:58349"/>
    </ligand>
</feature>
<feature type="binding site" evidence="1">
    <location>
        <begin position="78"/>
        <end position="80"/>
    </location>
    <ligand>
        <name>NADP(+)</name>
        <dbReference type="ChEBI" id="CHEBI:58349"/>
    </ligand>
</feature>
<feature type="binding site" evidence="1">
    <location>
        <position position="106"/>
    </location>
    <ligand>
        <name>NADP(+)</name>
        <dbReference type="ChEBI" id="CHEBI:58349"/>
    </ligand>
</feature>
<feature type="binding site" description="in other chain" evidence="1">
    <location>
        <position position="106"/>
    </location>
    <ligand>
        <name>substrate</name>
        <note>ligand shared between dimeric partners</note>
    </ligand>
</feature>
<feature type="binding site" description="in other chain" evidence="1">
    <location>
        <begin position="132"/>
        <end position="134"/>
    </location>
    <ligand>
        <name>substrate</name>
        <note>ligand shared between dimeric partners</note>
    </ligand>
</feature>
<feature type="binding site" description="in other chain" evidence="1">
    <location>
        <begin position="189"/>
        <end position="190"/>
    </location>
    <ligand>
        <name>substrate</name>
        <note>ligand shared between dimeric partners</note>
    </ligand>
</feature>
<feature type="binding site" description="in other chain" evidence="1">
    <location>
        <position position="194"/>
    </location>
    <ligand>
        <name>substrate</name>
        <note>ligand shared between dimeric partners</note>
    </ligand>
</feature>
<feature type="binding site" description="in other chain" evidence="1">
    <location>
        <position position="264"/>
    </location>
    <ligand>
        <name>substrate</name>
        <note>ligand shared between dimeric partners</note>
    </ligand>
</feature>
<feature type="binding site" description="in other chain" evidence="1">
    <location>
        <position position="291"/>
    </location>
    <ligand>
        <name>substrate</name>
        <note>ligand shared between dimeric partners</note>
    </ligand>
</feature>
<feature type="binding site" evidence="1">
    <location>
        <position position="454"/>
    </location>
    <ligand>
        <name>substrate</name>
        <note>ligand shared between dimeric partners</note>
    </ligand>
</feature>
<feature type="binding site" evidence="1">
    <location>
        <position position="460"/>
    </location>
    <ligand>
        <name>substrate</name>
        <note>ligand shared between dimeric partners</note>
    </ligand>
</feature>
<proteinExistence type="evidence at protein level"/>
<keyword id="KW-0963">Cytoplasm</keyword>
<keyword id="KW-0311">Gluconate utilization</keyword>
<keyword id="KW-0521">NADP</keyword>
<keyword id="KW-0560">Oxidoreductase</keyword>
<keyword id="KW-0570">Pentose shunt</keyword>
<keyword id="KW-1185">Reference proteome</keyword>
<reference key="1">
    <citation type="journal article" date="2001" name="Eur. J. Biochem.">
        <title>Purification and cloning of chloroplast 6-phosphogluconate dehydrogenase from spinach. Cyanobacterial genes for chloroplast and cytosolic isoenzymes encoded in eukaryotic chromosomes.</title>
        <authorList>
            <person name="Krepinsky K."/>
            <person name="Plaumann M."/>
            <person name="Martin W."/>
            <person name="Schnarrenberger C."/>
        </authorList>
    </citation>
    <scope>NUCLEOTIDE SEQUENCE [MRNA]</scope>
    <scope>SUBUNIT</scope>
</reference>
<evidence type="ECO:0000250" key="1"/>
<evidence type="ECO:0000269" key="2">
    <source>
    </source>
</evidence>
<evidence type="ECO:0000305" key="3"/>
<sequence>MAPPTRIGLAGLAVMGQNLALNIAEKGFPISVYNRTTSKVDETVERAKQEGNLPLYGFHDPESFVNSIQKPRVIIMLVKAGAPVDATIKTLSAYLEKGDCIIDGGNEWYENTERREKAMEEKGLLYLGMGVSGGEEGARNGPSMMPGGSFDAYKNIEDILTKVAAQVDSGPCVTYIGKGGSGNFVKMIHNGIEYGDMQLIAEAYDVLKSVGKLSNEELKEVFAEWNRGELLSFLIEITADIFGIKDDKGEGYLVDKVLDKTGMKGTGKWTVQQAAELSVAAPTIASSLDSRFLSGLKDERVEAAKVFKAGGVEDTLSDQVVDKKKLIDDVRQALYAAKICSYAQGMNLIRAKSVEKEWDLKLGELARIWKGGCIIRAMFLDRIKKAYDRNPNLSNLLIDPEFSKEMIERQSAWRRVVCLAIGAGISTPGMSSSLAYFDSYRRERLPANLVQAQRDYFGAHTYERIDIPGAFHTEWFKLAKSKI</sequence>
<accession>Q94KU1</accession>
<organism>
    <name type="scientific">Spinacia oleracea</name>
    <name type="common">Spinach</name>
    <dbReference type="NCBI Taxonomy" id="3562"/>
    <lineage>
        <taxon>Eukaryota</taxon>
        <taxon>Viridiplantae</taxon>
        <taxon>Streptophyta</taxon>
        <taxon>Embryophyta</taxon>
        <taxon>Tracheophyta</taxon>
        <taxon>Spermatophyta</taxon>
        <taxon>Magnoliopsida</taxon>
        <taxon>eudicotyledons</taxon>
        <taxon>Gunneridae</taxon>
        <taxon>Pentapetalae</taxon>
        <taxon>Caryophyllales</taxon>
        <taxon>Chenopodiaceae</taxon>
        <taxon>Chenopodioideae</taxon>
        <taxon>Anserineae</taxon>
        <taxon>Spinacia</taxon>
    </lineage>
</organism>
<protein>
    <recommendedName>
        <fullName>6-phosphogluconate dehydrogenase, decarboxylating 1</fullName>
        <ecNumber>1.1.1.44</ecNumber>
    </recommendedName>
</protein>
<name>6PGD1_SPIOL</name>
<dbReference type="EC" id="1.1.1.44"/>
<dbReference type="EMBL" id="AF307144">
    <property type="protein sequence ID" value="AAK51690.1"/>
    <property type="molecule type" value="mRNA"/>
</dbReference>
<dbReference type="SMR" id="Q94KU1"/>
<dbReference type="UniPathway" id="UPA00115">
    <property type="reaction ID" value="UER00410"/>
</dbReference>
<dbReference type="Proteomes" id="UP001155700">
    <property type="component" value="Unplaced"/>
</dbReference>
<dbReference type="GO" id="GO:0005829">
    <property type="term" value="C:cytosol"/>
    <property type="evidence" value="ECO:0000318"/>
    <property type="project" value="GO_Central"/>
</dbReference>
<dbReference type="GO" id="GO:0050661">
    <property type="term" value="F:NADP binding"/>
    <property type="evidence" value="ECO:0000318"/>
    <property type="project" value="GO_Central"/>
</dbReference>
<dbReference type="GO" id="GO:0004616">
    <property type="term" value="F:phosphogluconate dehydrogenase (decarboxylating) activity"/>
    <property type="evidence" value="ECO:0000318"/>
    <property type="project" value="GO_Central"/>
</dbReference>
<dbReference type="GO" id="GO:0019521">
    <property type="term" value="P:D-gluconate metabolic process"/>
    <property type="evidence" value="ECO:0007669"/>
    <property type="project" value="UniProtKB-KW"/>
</dbReference>
<dbReference type="GO" id="GO:0009051">
    <property type="term" value="P:pentose-phosphate shunt, oxidative branch"/>
    <property type="evidence" value="ECO:0000318"/>
    <property type="project" value="GO_Central"/>
</dbReference>
<dbReference type="FunFam" id="1.10.1040.10:FF:000002">
    <property type="entry name" value="6-phosphogluconate dehydrogenase, decarboxylating"/>
    <property type="match status" value="1"/>
</dbReference>
<dbReference type="FunFam" id="1.20.5.320:FF:000001">
    <property type="entry name" value="6-phosphogluconate dehydrogenase, decarboxylating"/>
    <property type="match status" value="1"/>
</dbReference>
<dbReference type="FunFam" id="3.40.50.720:FF:000007">
    <property type="entry name" value="6-phosphogluconate dehydrogenase, decarboxylating"/>
    <property type="match status" value="1"/>
</dbReference>
<dbReference type="Gene3D" id="1.20.5.320">
    <property type="entry name" value="6-Phosphogluconate Dehydrogenase, domain 3"/>
    <property type="match status" value="1"/>
</dbReference>
<dbReference type="Gene3D" id="1.10.1040.10">
    <property type="entry name" value="N-(1-d-carboxylethyl)-l-norvaline Dehydrogenase, domain 2"/>
    <property type="match status" value="1"/>
</dbReference>
<dbReference type="Gene3D" id="3.40.50.720">
    <property type="entry name" value="NAD(P)-binding Rossmann-like Domain"/>
    <property type="match status" value="1"/>
</dbReference>
<dbReference type="InterPro" id="IPR008927">
    <property type="entry name" value="6-PGluconate_DH-like_C_sf"/>
</dbReference>
<dbReference type="InterPro" id="IPR013328">
    <property type="entry name" value="6PGD_dom2"/>
</dbReference>
<dbReference type="InterPro" id="IPR006114">
    <property type="entry name" value="6PGDH_C"/>
</dbReference>
<dbReference type="InterPro" id="IPR006113">
    <property type="entry name" value="6PGDH_Gnd/GntZ"/>
</dbReference>
<dbReference type="InterPro" id="IPR006115">
    <property type="entry name" value="6PGDH_NADP-bd"/>
</dbReference>
<dbReference type="InterPro" id="IPR036291">
    <property type="entry name" value="NAD(P)-bd_dom_sf"/>
</dbReference>
<dbReference type="InterPro" id="IPR006183">
    <property type="entry name" value="Pgluconate_DH"/>
</dbReference>
<dbReference type="NCBIfam" id="TIGR00873">
    <property type="entry name" value="gnd"/>
    <property type="match status" value="1"/>
</dbReference>
<dbReference type="NCBIfam" id="NF006765">
    <property type="entry name" value="PRK09287.1"/>
    <property type="match status" value="1"/>
</dbReference>
<dbReference type="PANTHER" id="PTHR11811">
    <property type="entry name" value="6-PHOSPHOGLUCONATE DEHYDROGENASE"/>
    <property type="match status" value="1"/>
</dbReference>
<dbReference type="Pfam" id="PF00393">
    <property type="entry name" value="6PGD"/>
    <property type="match status" value="1"/>
</dbReference>
<dbReference type="Pfam" id="PF03446">
    <property type="entry name" value="NAD_binding_2"/>
    <property type="match status" value="1"/>
</dbReference>
<dbReference type="PIRSF" id="PIRSF000109">
    <property type="entry name" value="6PGD"/>
    <property type="match status" value="1"/>
</dbReference>
<dbReference type="PRINTS" id="PR00076">
    <property type="entry name" value="6PGDHDRGNASE"/>
</dbReference>
<dbReference type="SMART" id="SM01350">
    <property type="entry name" value="6PGD"/>
    <property type="match status" value="1"/>
</dbReference>
<dbReference type="SUPFAM" id="SSF48179">
    <property type="entry name" value="6-phosphogluconate dehydrogenase C-terminal domain-like"/>
    <property type="match status" value="1"/>
</dbReference>
<dbReference type="SUPFAM" id="SSF51735">
    <property type="entry name" value="NAD(P)-binding Rossmann-fold domains"/>
    <property type="match status" value="1"/>
</dbReference>
<gene>
    <name type="primary">pgdC</name>
</gene>
<comment type="function">
    <text evidence="1">Catalyzes the oxidative decarboxylation of 6-phosphogluconate to ribulose 5-phosphate and CO(2), with concomitant reduction of NADP to NADPH.</text>
</comment>
<comment type="catalytic activity">
    <reaction>
        <text>6-phospho-D-gluconate + NADP(+) = D-ribulose 5-phosphate + CO2 + NADPH</text>
        <dbReference type="Rhea" id="RHEA:10116"/>
        <dbReference type="ChEBI" id="CHEBI:16526"/>
        <dbReference type="ChEBI" id="CHEBI:57783"/>
        <dbReference type="ChEBI" id="CHEBI:58121"/>
        <dbReference type="ChEBI" id="CHEBI:58349"/>
        <dbReference type="ChEBI" id="CHEBI:58759"/>
        <dbReference type="EC" id="1.1.1.44"/>
    </reaction>
</comment>
<comment type="pathway">
    <text>Carbohydrate degradation; pentose phosphate pathway; D-ribulose 5-phosphate from D-glucose 6-phosphate (oxidative stage): step 3/3.</text>
</comment>
<comment type="subunit">
    <text evidence="2">Homodimer.</text>
</comment>
<comment type="subcellular location">
    <subcellularLocation>
        <location evidence="1">Cytoplasm</location>
    </subcellularLocation>
</comment>
<comment type="similarity">
    <text evidence="3">Belongs to the 6-phosphogluconate dehydrogenase family.</text>
</comment>